<reference key="1">
    <citation type="journal article" date="1993" name="Mol. Microbiol.">
        <title>Bacillus subtilis genome project: cloning and sequencing of the 97 kb region from 325 degrees to 333 degrees.</title>
        <authorList>
            <person name="Glaser P."/>
            <person name="Kunst F."/>
            <person name="Arnaud M."/>
            <person name="Coudart M.P."/>
            <person name="Gonzales W."/>
            <person name="Hullo M.-F."/>
            <person name="Ionescu M."/>
            <person name="Lubochinsky B."/>
            <person name="Marcelino L."/>
            <person name="Moszer I."/>
            <person name="Presecan E."/>
            <person name="Santana M."/>
            <person name="Schneider E."/>
            <person name="Schweizer J."/>
            <person name="Vertes A."/>
            <person name="Rapoport G."/>
            <person name="Danchin A."/>
        </authorList>
    </citation>
    <scope>NUCLEOTIDE SEQUENCE [GENOMIC DNA]</scope>
    <source>
        <strain>168</strain>
    </source>
</reference>
<reference key="2">
    <citation type="journal article" date="1997" name="Nature">
        <title>The complete genome sequence of the Gram-positive bacterium Bacillus subtilis.</title>
        <authorList>
            <person name="Kunst F."/>
            <person name="Ogasawara N."/>
            <person name="Moszer I."/>
            <person name="Albertini A.M."/>
            <person name="Alloni G."/>
            <person name="Azevedo V."/>
            <person name="Bertero M.G."/>
            <person name="Bessieres P."/>
            <person name="Bolotin A."/>
            <person name="Borchert S."/>
            <person name="Borriss R."/>
            <person name="Boursier L."/>
            <person name="Brans A."/>
            <person name="Braun M."/>
            <person name="Brignell S.C."/>
            <person name="Bron S."/>
            <person name="Brouillet S."/>
            <person name="Bruschi C.V."/>
            <person name="Caldwell B."/>
            <person name="Capuano V."/>
            <person name="Carter N.M."/>
            <person name="Choi S.-K."/>
            <person name="Codani J.-J."/>
            <person name="Connerton I.F."/>
            <person name="Cummings N.J."/>
            <person name="Daniel R.A."/>
            <person name="Denizot F."/>
            <person name="Devine K.M."/>
            <person name="Duesterhoeft A."/>
            <person name="Ehrlich S.D."/>
            <person name="Emmerson P.T."/>
            <person name="Entian K.-D."/>
            <person name="Errington J."/>
            <person name="Fabret C."/>
            <person name="Ferrari E."/>
            <person name="Foulger D."/>
            <person name="Fritz C."/>
            <person name="Fujita M."/>
            <person name="Fujita Y."/>
            <person name="Fuma S."/>
            <person name="Galizzi A."/>
            <person name="Galleron N."/>
            <person name="Ghim S.-Y."/>
            <person name="Glaser P."/>
            <person name="Goffeau A."/>
            <person name="Golightly E.J."/>
            <person name="Grandi G."/>
            <person name="Guiseppi G."/>
            <person name="Guy B.J."/>
            <person name="Haga K."/>
            <person name="Haiech J."/>
            <person name="Harwood C.R."/>
            <person name="Henaut A."/>
            <person name="Hilbert H."/>
            <person name="Holsappel S."/>
            <person name="Hosono S."/>
            <person name="Hullo M.-F."/>
            <person name="Itaya M."/>
            <person name="Jones L.-M."/>
            <person name="Joris B."/>
            <person name="Karamata D."/>
            <person name="Kasahara Y."/>
            <person name="Klaerr-Blanchard M."/>
            <person name="Klein C."/>
            <person name="Kobayashi Y."/>
            <person name="Koetter P."/>
            <person name="Koningstein G."/>
            <person name="Krogh S."/>
            <person name="Kumano M."/>
            <person name="Kurita K."/>
            <person name="Lapidus A."/>
            <person name="Lardinois S."/>
            <person name="Lauber J."/>
            <person name="Lazarevic V."/>
            <person name="Lee S.-M."/>
            <person name="Levine A."/>
            <person name="Liu H."/>
            <person name="Masuda S."/>
            <person name="Mauel C."/>
            <person name="Medigue C."/>
            <person name="Medina N."/>
            <person name="Mellado R.P."/>
            <person name="Mizuno M."/>
            <person name="Moestl D."/>
            <person name="Nakai S."/>
            <person name="Noback M."/>
            <person name="Noone D."/>
            <person name="O'Reilly M."/>
            <person name="Ogawa K."/>
            <person name="Ogiwara A."/>
            <person name="Oudega B."/>
            <person name="Park S.-H."/>
            <person name="Parro V."/>
            <person name="Pohl T.M."/>
            <person name="Portetelle D."/>
            <person name="Porwollik S."/>
            <person name="Prescott A.M."/>
            <person name="Presecan E."/>
            <person name="Pujic P."/>
            <person name="Purnelle B."/>
            <person name="Rapoport G."/>
            <person name="Rey M."/>
            <person name="Reynolds S."/>
            <person name="Rieger M."/>
            <person name="Rivolta C."/>
            <person name="Rocha E."/>
            <person name="Roche B."/>
            <person name="Rose M."/>
            <person name="Sadaie Y."/>
            <person name="Sato T."/>
            <person name="Scanlan E."/>
            <person name="Schleich S."/>
            <person name="Schroeter R."/>
            <person name="Scoffone F."/>
            <person name="Sekiguchi J."/>
            <person name="Sekowska A."/>
            <person name="Seror S.J."/>
            <person name="Serror P."/>
            <person name="Shin B.-S."/>
            <person name="Soldo B."/>
            <person name="Sorokin A."/>
            <person name="Tacconi E."/>
            <person name="Takagi T."/>
            <person name="Takahashi H."/>
            <person name="Takemaru K."/>
            <person name="Takeuchi M."/>
            <person name="Tamakoshi A."/>
            <person name="Tanaka T."/>
            <person name="Terpstra P."/>
            <person name="Tognoni A."/>
            <person name="Tosato V."/>
            <person name="Uchiyama S."/>
            <person name="Vandenbol M."/>
            <person name="Vannier F."/>
            <person name="Vassarotti A."/>
            <person name="Viari A."/>
            <person name="Wambutt R."/>
            <person name="Wedler E."/>
            <person name="Wedler H."/>
            <person name="Weitzenegger T."/>
            <person name="Winters P."/>
            <person name="Wipat A."/>
            <person name="Yamamoto H."/>
            <person name="Yamane K."/>
            <person name="Yasumoto K."/>
            <person name="Yata K."/>
            <person name="Yoshida K."/>
            <person name="Yoshikawa H.-F."/>
            <person name="Zumstein E."/>
            <person name="Yoshikawa H."/>
            <person name="Danchin A."/>
        </authorList>
    </citation>
    <scope>NUCLEOTIDE SEQUENCE [LARGE SCALE GENOMIC DNA]</scope>
    <source>
        <strain>168</strain>
    </source>
</reference>
<reference key="3">
    <citation type="journal article" date="2007" name="Nucleic Acids Res.">
        <title>Protein p56 from the Bacillus subtilis phage phi29 inhibits DNA-binding ability of uracil-DNA glycosylase.</title>
        <authorList>
            <person name="Serrano-Heras G."/>
            <person name="Ruiz-Maso J.A."/>
            <person name="del Solar G."/>
            <person name="Espinosa M."/>
            <person name="Bravo A."/>
            <person name="Salas M."/>
        </authorList>
    </citation>
    <scope>INTERACTION WITH BACILLUS PHAGE PHI29 P56</scope>
</reference>
<reference key="4">
    <citation type="journal article" date="2010" name="PLoS Genet.">
        <title>The C-terminal domain of the bacterial SSB protein acts as a DNA maintenance hub at active chromosome replication forks.</title>
        <authorList>
            <person name="Costes A."/>
            <person name="Lecointe F."/>
            <person name="McGovern S."/>
            <person name="Quevillon-Cheruel S."/>
            <person name="Polard P."/>
        </authorList>
    </citation>
    <scope>INTERACTION WITH SSBA</scope>
    <source>
        <strain>168</strain>
    </source>
</reference>
<keyword id="KW-0002">3D-structure</keyword>
<keyword id="KW-0963">Cytoplasm</keyword>
<keyword id="KW-0227">DNA damage</keyword>
<keyword id="KW-0234">DNA repair</keyword>
<keyword id="KW-0378">Hydrolase</keyword>
<keyword id="KW-1185">Reference proteome</keyword>
<name>UNG_BACSU</name>
<evidence type="ECO:0000250" key="1"/>
<evidence type="ECO:0000269" key="2">
    <source>
    </source>
</evidence>
<evidence type="ECO:0000269" key="3">
    <source>
    </source>
</evidence>
<evidence type="ECO:0000305" key="4"/>
<evidence type="ECO:0007829" key="5">
    <source>
        <dbReference type="PDB" id="3ZOQ"/>
    </source>
</evidence>
<dbReference type="EC" id="3.2.2.27"/>
<dbReference type="EMBL" id="X73124">
    <property type="protein sequence ID" value="CAA51613.1"/>
    <property type="molecule type" value="Genomic_DNA"/>
</dbReference>
<dbReference type="EMBL" id="AL009126">
    <property type="protein sequence ID" value="CAB15823.1"/>
    <property type="molecule type" value="Genomic_DNA"/>
</dbReference>
<dbReference type="PIR" id="S39712">
    <property type="entry name" value="S39712"/>
</dbReference>
<dbReference type="RefSeq" id="NP_391676.1">
    <property type="nucleotide sequence ID" value="NC_000964.3"/>
</dbReference>
<dbReference type="RefSeq" id="WP_003242965.1">
    <property type="nucleotide sequence ID" value="NZ_OZ025638.1"/>
</dbReference>
<dbReference type="PDB" id="3ZOQ">
    <property type="method" value="X-ray"/>
    <property type="resolution" value="1.45 A"/>
    <property type="chains" value="A=1-225"/>
</dbReference>
<dbReference type="PDB" id="3ZOR">
    <property type="method" value="X-ray"/>
    <property type="resolution" value="2.95 A"/>
    <property type="chains" value="A=1-225"/>
</dbReference>
<dbReference type="PDBsum" id="3ZOQ"/>
<dbReference type="PDBsum" id="3ZOR"/>
<dbReference type="SMR" id="P39615"/>
<dbReference type="FunCoup" id="P39615">
    <property type="interactions" value="523"/>
</dbReference>
<dbReference type="STRING" id="224308.BSU37970"/>
<dbReference type="PaxDb" id="224308-BSU37970"/>
<dbReference type="EnsemblBacteria" id="CAB15823">
    <property type="protein sequence ID" value="CAB15823"/>
    <property type="gene ID" value="BSU_37970"/>
</dbReference>
<dbReference type="GeneID" id="937265"/>
<dbReference type="KEGG" id="bsu:BSU37970"/>
<dbReference type="PATRIC" id="fig|224308.179.peg.4111"/>
<dbReference type="eggNOG" id="COG0692">
    <property type="taxonomic scope" value="Bacteria"/>
</dbReference>
<dbReference type="InParanoid" id="P39615"/>
<dbReference type="OrthoDB" id="9804372at2"/>
<dbReference type="PhylomeDB" id="P39615"/>
<dbReference type="BioCyc" id="BSUB:BSU37970-MONOMER"/>
<dbReference type="SABIO-RK" id="P39615"/>
<dbReference type="EvolutionaryTrace" id="P39615"/>
<dbReference type="Proteomes" id="UP000001570">
    <property type="component" value="Chromosome"/>
</dbReference>
<dbReference type="GO" id="GO:0005737">
    <property type="term" value="C:cytoplasm"/>
    <property type="evidence" value="ECO:0007669"/>
    <property type="project" value="UniProtKB-SubCell"/>
</dbReference>
<dbReference type="GO" id="GO:0004844">
    <property type="term" value="F:uracil DNA N-glycosylase activity"/>
    <property type="evidence" value="ECO:0007669"/>
    <property type="project" value="UniProtKB-UniRule"/>
</dbReference>
<dbReference type="GO" id="GO:0097510">
    <property type="term" value="P:base-excision repair, AP site formation via deaminated base removal"/>
    <property type="evidence" value="ECO:0000318"/>
    <property type="project" value="GO_Central"/>
</dbReference>
<dbReference type="CDD" id="cd10027">
    <property type="entry name" value="UDG-F1-like"/>
    <property type="match status" value="1"/>
</dbReference>
<dbReference type="FunFam" id="3.40.470.10:FF:000001">
    <property type="entry name" value="Uracil-DNA glycosylase"/>
    <property type="match status" value="1"/>
</dbReference>
<dbReference type="Gene3D" id="3.40.470.10">
    <property type="entry name" value="Uracil-DNA glycosylase-like domain"/>
    <property type="match status" value="1"/>
</dbReference>
<dbReference type="HAMAP" id="MF_00148">
    <property type="entry name" value="UDG"/>
    <property type="match status" value="1"/>
</dbReference>
<dbReference type="InterPro" id="IPR002043">
    <property type="entry name" value="UDG_fam1"/>
</dbReference>
<dbReference type="InterPro" id="IPR018085">
    <property type="entry name" value="Ura-DNA_Glyclase_AS"/>
</dbReference>
<dbReference type="InterPro" id="IPR005122">
    <property type="entry name" value="Uracil-DNA_glycosylase-like"/>
</dbReference>
<dbReference type="InterPro" id="IPR036895">
    <property type="entry name" value="Uracil-DNA_glycosylase-like_sf"/>
</dbReference>
<dbReference type="NCBIfam" id="NF003588">
    <property type="entry name" value="PRK05254.1-1"/>
    <property type="match status" value="1"/>
</dbReference>
<dbReference type="NCBIfam" id="NF003589">
    <property type="entry name" value="PRK05254.1-2"/>
    <property type="match status" value="1"/>
</dbReference>
<dbReference type="NCBIfam" id="NF003591">
    <property type="entry name" value="PRK05254.1-4"/>
    <property type="match status" value="1"/>
</dbReference>
<dbReference type="NCBIfam" id="NF003592">
    <property type="entry name" value="PRK05254.1-5"/>
    <property type="match status" value="1"/>
</dbReference>
<dbReference type="NCBIfam" id="TIGR00628">
    <property type="entry name" value="ung"/>
    <property type="match status" value="1"/>
</dbReference>
<dbReference type="PANTHER" id="PTHR11264">
    <property type="entry name" value="URACIL-DNA GLYCOSYLASE"/>
    <property type="match status" value="1"/>
</dbReference>
<dbReference type="PANTHER" id="PTHR11264:SF0">
    <property type="entry name" value="URACIL-DNA GLYCOSYLASE"/>
    <property type="match status" value="1"/>
</dbReference>
<dbReference type="Pfam" id="PF03167">
    <property type="entry name" value="UDG"/>
    <property type="match status" value="1"/>
</dbReference>
<dbReference type="SMART" id="SM00986">
    <property type="entry name" value="UDG"/>
    <property type="match status" value="1"/>
</dbReference>
<dbReference type="SMART" id="SM00987">
    <property type="entry name" value="UreE_C"/>
    <property type="match status" value="1"/>
</dbReference>
<dbReference type="SUPFAM" id="SSF52141">
    <property type="entry name" value="Uracil-DNA glycosylase-like"/>
    <property type="match status" value="1"/>
</dbReference>
<dbReference type="PROSITE" id="PS00130">
    <property type="entry name" value="U_DNA_GLYCOSYLASE"/>
    <property type="match status" value="1"/>
</dbReference>
<sequence length="225" mass="26047">MKQLLQDSWWNQLKEEFEKPYYQELREMLKREYAEQTIYPDSRDIFNALHYTSYDDVKVVILGQDPYHGPGQAQGLSFSVKPGVKQPPSLKNIFLELQQDIGCSIPNHGSLVSWAKQGVLLLNTVLTVRRGQANSHKGKGWERLTDRIIDVLSERERPVIFILWGRHAQMKKERIDTSKHFIIESTHPSPFSARNGFFGSRPFSRANAYLEKMGEAPIDWCIKDL</sequence>
<accession>P39615</accession>
<organism>
    <name type="scientific">Bacillus subtilis (strain 168)</name>
    <dbReference type="NCBI Taxonomy" id="224308"/>
    <lineage>
        <taxon>Bacteria</taxon>
        <taxon>Bacillati</taxon>
        <taxon>Bacillota</taxon>
        <taxon>Bacilli</taxon>
        <taxon>Bacillales</taxon>
        <taxon>Bacillaceae</taxon>
        <taxon>Bacillus</taxon>
    </lineage>
</organism>
<proteinExistence type="evidence at protein level"/>
<protein>
    <recommendedName>
        <fullName>Uracil-DNA glycosylase</fullName>
        <shortName>UDG</shortName>
        <ecNumber>3.2.2.27</ecNumber>
    </recommendedName>
</protein>
<comment type="function">
    <text evidence="1">Excises uracil residues from the DNA which can arise as a result of misincorporation of dUMP residues by DNA polymerase or due to deamination of cytosine.</text>
</comment>
<comment type="catalytic activity">
    <reaction>
        <text>Hydrolyzes single-stranded DNA or mismatched double-stranded DNA and polynucleotides, releasing free uracil.</text>
        <dbReference type="EC" id="3.2.2.27"/>
    </reaction>
</comment>
<comment type="subunit">
    <text evidence="2 3">Interacts with bacillus phage phi29 protein p56; this interaction inhibits the uracil-DNA glycosylase (PubMed:17698500). Interacts with SSB (ssbA) (PubMed:21170359).</text>
</comment>
<comment type="subcellular location">
    <subcellularLocation>
        <location evidence="1">Cytoplasm</location>
    </subcellularLocation>
</comment>
<comment type="similarity">
    <text evidence="4">Belongs to the uracil-DNA glycosylase (UDG) superfamily. UNG family.</text>
</comment>
<feature type="chain" id="PRO_0000176067" description="Uracil-DNA glycosylase">
    <location>
        <begin position="1"/>
        <end position="225"/>
    </location>
</feature>
<feature type="active site" description="Proton acceptor" evidence="1">
    <location>
        <position position="65"/>
    </location>
</feature>
<feature type="helix" evidence="5">
    <location>
        <begin position="7"/>
        <end position="17"/>
    </location>
</feature>
<feature type="helix" evidence="5">
    <location>
        <begin position="20"/>
        <end position="35"/>
    </location>
</feature>
<feature type="strand" evidence="5">
    <location>
        <begin position="38"/>
        <end position="40"/>
    </location>
</feature>
<feature type="helix" evidence="5">
    <location>
        <begin position="42"/>
        <end position="44"/>
    </location>
</feature>
<feature type="helix" evidence="5">
    <location>
        <begin position="47"/>
        <end position="51"/>
    </location>
</feature>
<feature type="turn" evidence="5">
    <location>
        <begin position="54"/>
        <end position="56"/>
    </location>
</feature>
<feature type="strand" evidence="5">
    <location>
        <begin position="59"/>
        <end position="61"/>
    </location>
</feature>
<feature type="turn" evidence="5">
    <location>
        <begin position="70"/>
        <end position="72"/>
    </location>
</feature>
<feature type="strand" evidence="5">
    <location>
        <begin position="75"/>
        <end position="78"/>
    </location>
</feature>
<feature type="helix" evidence="5">
    <location>
        <begin position="88"/>
        <end position="100"/>
    </location>
</feature>
<feature type="helix" evidence="5">
    <location>
        <begin position="112"/>
        <end position="116"/>
    </location>
</feature>
<feature type="strand" evidence="5">
    <location>
        <begin position="123"/>
        <end position="125"/>
    </location>
</feature>
<feature type="turn" evidence="5">
    <location>
        <begin position="133"/>
        <end position="138"/>
    </location>
</feature>
<feature type="helix" evidence="5">
    <location>
        <begin position="141"/>
        <end position="154"/>
    </location>
</feature>
<feature type="strand" evidence="5">
    <location>
        <begin position="160"/>
        <end position="165"/>
    </location>
</feature>
<feature type="helix" evidence="5">
    <location>
        <begin position="166"/>
        <end position="169"/>
    </location>
</feature>
<feature type="helix" evidence="5">
    <location>
        <begin position="170"/>
        <end position="174"/>
    </location>
</feature>
<feature type="turn" evidence="5">
    <location>
        <begin position="177"/>
        <end position="179"/>
    </location>
</feature>
<feature type="strand" evidence="5">
    <location>
        <begin position="181"/>
        <end position="185"/>
    </location>
</feature>
<feature type="turn" evidence="5">
    <location>
        <begin position="190"/>
        <end position="192"/>
    </location>
</feature>
<feature type="helix" evidence="5">
    <location>
        <begin position="193"/>
        <end position="195"/>
    </location>
</feature>
<feature type="turn" evidence="5">
    <location>
        <begin position="196"/>
        <end position="199"/>
    </location>
</feature>
<feature type="helix" evidence="5">
    <location>
        <begin position="202"/>
        <end position="212"/>
    </location>
</feature>
<gene>
    <name type="primary">ung</name>
    <name type="synonym">ywdG</name>
    <name type="ordered locus">BSU37970</name>
    <name type="ORF">ipa-57d</name>
</gene>